<accession>B1Y6S6</accession>
<reference key="1">
    <citation type="submission" date="2008-03" db="EMBL/GenBank/DDBJ databases">
        <title>Complete sequence of Leptothrix cholodnii SP-6.</title>
        <authorList>
            <consortium name="US DOE Joint Genome Institute"/>
            <person name="Copeland A."/>
            <person name="Lucas S."/>
            <person name="Lapidus A."/>
            <person name="Glavina del Rio T."/>
            <person name="Dalin E."/>
            <person name="Tice H."/>
            <person name="Bruce D."/>
            <person name="Goodwin L."/>
            <person name="Pitluck S."/>
            <person name="Chertkov O."/>
            <person name="Brettin T."/>
            <person name="Detter J.C."/>
            <person name="Han C."/>
            <person name="Kuske C.R."/>
            <person name="Schmutz J."/>
            <person name="Larimer F."/>
            <person name="Land M."/>
            <person name="Hauser L."/>
            <person name="Kyrpides N."/>
            <person name="Lykidis A."/>
            <person name="Emerson D."/>
            <person name="Richardson P."/>
        </authorList>
    </citation>
    <scope>NUCLEOTIDE SEQUENCE [LARGE SCALE GENOMIC DNA]</scope>
    <source>
        <strain>ATCC 51168 / LMG 8142 / SP-6</strain>
    </source>
</reference>
<sequence>MRLHFTKMQGAGNDFVVLDATRAPLALSAADYRFLGDRRFGVGADQILVVERSTTPGVDFRYRIFNGGSGDEVEQCGNGARCFARFVRDNGLSQQVRVKVETVNSLIELHVEADGRVTVDMNQPIFEHALIPFDSAGLSARPHNGHGNGFELWPLQLPGASLPSVDVAVLSMGNPHAVQRVHDVDTAPVAEIGPRVETHARFPRHVNAGFMQVMSRREVRLRVFERGAGETLACGTGACAAVVAGIRLGWLDPEVDVQTRGGLLTIAWAGLGHPVLMTGPAQTVFTGDIDLPTTSVQ</sequence>
<comment type="function">
    <text evidence="1">Catalyzes the stereoinversion of LL-2,6-diaminopimelate (L,L-DAP) to meso-diaminopimelate (meso-DAP), a precursor of L-lysine and an essential component of the bacterial peptidoglycan.</text>
</comment>
<comment type="catalytic activity">
    <reaction evidence="1">
        <text>(2S,6S)-2,6-diaminopimelate = meso-2,6-diaminopimelate</text>
        <dbReference type="Rhea" id="RHEA:15393"/>
        <dbReference type="ChEBI" id="CHEBI:57609"/>
        <dbReference type="ChEBI" id="CHEBI:57791"/>
        <dbReference type="EC" id="5.1.1.7"/>
    </reaction>
</comment>
<comment type="pathway">
    <text evidence="1">Amino-acid biosynthesis; L-lysine biosynthesis via DAP pathway; DL-2,6-diaminopimelate from LL-2,6-diaminopimelate: step 1/1.</text>
</comment>
<comment type="subunit">
    <text evidence="1">Homodimer.</text>
</comment>
<comment type="subcellular location">
    <subcellularLocation>
        <location evidence="1">Cytoplasm</location>
    </subcellularLocation>
</comment>
<comment type="similarity">
    <text evidence="1">Belongs to the diaminopimelate epimerase family.</text>
</comment>
<dbReference type="EC" id="5.1.1.7" evidence="1"/>
<dbReference type="EMBL" id="CP001013">
    <property type="protein sequence ID" value="ACB32404.1"/>
    <property type="molecule type" value="Genomic_DNA"/>
</dbReference>
<dbReference type="RefSeq" id="WP_012345166.1">
    <property type="nucleotide sequence ID" value="NC_010524.1"/>
</dbReference>
<dbReference type="SMR" id="B1Y6S6"/>
<dbReference type="STRING" id="395495.Lcho_0129"/>
<dbReference type="KEGG" id="lch:Lcho_0129"/>
<dbReference type="eggNOG" id="COG0253">
    <property type="taxonomic scope" value="Bacteria"/>
</dbReference>
<dbReference type="HOGENOM" id="CLU_053306_1_1_4"/>
<dbReference type="OrthoDB" id="9805408at2"/>
<dbReference type="UniPathway" id="UPA00034">
    <property type="reaction ID" value="UER00025"/>
</dbReference>
<dbReference type="Proteomes" id="UP000001693">
    <property type="component" value="Chromosome"/>
</dbReference>
<dbReference type="GO" id="GO:0005829">
    <property type="term" value="C:cytosol"/>
    <property type="evidence" value="ECO:0007669"/>
    <property type="project" value="TreeGrafter"/>
</dbReference>
<dbReference type="GO" id="GO:0008837">
    <property type="term" value="F:diaminopimelate epimerase activity"/>
    <property type="evidence" value="ECO:0007669"/>
    <property type="project" value="UniProtKB-UniRule"/>
</dbReference>
<dbReference type="GO" id="GO:0009089">
    <property type="term" value="P:lysine biosynthetic process via diaminopimelate"/>
    <property type="evidence" value="ECO:0007669"/>
    <property type="project" value="UniProtKB-UniRule"/>
</dbReference>
<dbReference type="FunFam" id="3.10.310.10:FF:000001">
    <property type="entry name" value="Diaminopimelate epimerase"/>
    <property type="match status" value="1"/>
</dbReference>
<dbReference type="Gene3D" id="3.10.310.10">
    <property type="entry name" value="Diaminopimelate Epimerase, Chain A, domain 1"/>
    <property type="match status" value="2"/>
</dbReference>
<dbReference type="HAMAP" id="MF_00197">
    <property type="entry name" value="DAP_epimerase"/>
    <property type="match status" value="1"/>
</dbReference>
<dbReference type="InterPro" id="IPR001653">
    <property type="entry name" value="DAP_epimerase_DapF"/>
</dbReference>
<dbReference type="NCBIfam" id="TIGR00652">
    <property type="entry name" value="DapF"/>
    <property type="match status" value="1"/>
</dbReference>
<dbReference type="PANTHER" id="PTHR31689:SF0">
    <property type="entry name" value="DIAMINOPIMELATE EPIMERASE"/>
    <property type="match status" value="1"/>
</dbReference>
<dbReference type="PANTHER" id="PTHR31689">
    <property type="entry name" value="DIAMINOPIMELATE EPIMERASE, CHLOROPLASTIC"/>
    <property type="match status" value="1"/>
</dbReference>
<dbReference type="Pfam" id="PF01678">
    <property type="entry name" value="DAP_epimerase"/>
    <property type="match status" value="2"/>
</dbReference>
<dbReference type="SUPFAM" id="SSF54506">
    <property type="entry name" value="Diaminopimelate epimerase-like"/>
    <property type="match status" value="2"/>
</dbReference>
<feature type="chain" id="PRO_1000099244" description="Diaminopimelate epimerase">
    <location>
        <begin position="1"/>
        <end position="297"/>
    </location>
</feature>
<feature type="active site" description="Proton donor" evidence="1">
    <location>
        <position position="76"/>
    </location>
</feature>
<feature type="active site" description="Proton acceptor" evidence="1">
    <location>
        <position position="234"/>
    </location>
</feature>
<feature type="binding site" evidence="1">
    <location>
        <position position="13"/>
    </location>
    <ligand>
        <name>substrate</name>
    </ligand>
</feature>
<feature type="binding site" evidence="1">
    <location>
        <position position="46"/>
    </location>
    <ligand>
        <name>substrate</name>
    </ligand>
</feature>
<feature type="binding site" evidence="1">
    <location>
        <position position="66"/>
    </location>
    <ligand>
        <name>substrate</name>
    </ligand>
</feature>
<feature type="binding site" evidence="1">
    <location>
        <begin position="77"/>
        <end position="78"/>
    </location>
    <ligand>
        <name>substrate</name>
    </ligand>
</feature>
<feature type="binding site" evidence="1">
    <location>
        <position position="174"/>
    </location>
    <ligand>
        <name>substrate</name>
    </ligand>
</feature>
<feature type="binding site" evidence="1">
    <location>
        <position position="207"/>
    </location>
    <ligand>
        <name>substrate</name>
    </ligand>
</feature>
<feature type="binding site" evidence="1">
    <location>
        <begin position="225"/>
        <end position="226"/>
    </location>
    <ligand>
        <name>substrate</name>
    </ligand>
</feature>
<feature type="binding site" evidence="1">
    <location>
        <begin position="235"/>
        <end position="236"/>
    </location>
    <ligand>
        <name>substrate</name>
    </ligand>
</feature>
<feature type="site" description="Could be important to modulate the pK values of the two catalytic cysteine residues" evidence="1">
    <location>
        <position position="176"/>
    </location>
</feature>
<feature type="site" description="Could be important to modulate the pK values of the two catalytic cysteine residues" evidence="1">
    <location>
        <position position="225"/>
    </location>
</feature>
<evidence type="ECO:0000255" key="1">
    <source>
        <dbReference type="HAMAP-Rule" id="MF_00197"/>
    </source>
</evidence>
<gene>
    <name evidence="1" type="primary">dapF</name>
    <name type="ordered locus">Lcho_0129</name>
</gene>
<keyword id="KW-0028">Amino-acid biosynthesis</keyword>
<keyword id="KW-0963">Cytoplasm</keyword>
<keyword id="KW-0413">Isomerase</keyword>
<keyword id="KW-0457">Lysine biosynthesis</keyword>
<keyword id="KW-1185">Reference proteome</keyword>
<proteinExistence type="inferred from homology"/>
<protein>
    <recommendedName>
        <fullName evidence="1">Diaminopimelate epimerase</fullName>
        <shortName evidence="1">DAP epimerase</shortName>
        <ecNumber evidence="1">5.1.1.7</ecNumber>
    </recommendedName>
    <alternativeName>
        <fullName evidence="1">PLP-independent amino acid racemase</fullName>
    </alternativeName>
</protein>
<organism>
    <name type="scientific">Leptothrix cholodnii (strain ATCC 51168 / LMG 8142 / SP-6)</name>
    <name type="common">Leptothrix discophora (strain SP-6)</name>
    <dbReference type="NCBI Taxonomy" id="395495"/>
    <lineage>
        <taxon>Bacteria</taxon>
        <taxon>Pseudomonadati</taxon>
        <taxon>Pseudomonadota</taxon>
        <taxon>Betaproteobacteria</taxon>
        <taxon>Burkholderiales</taxon>
        <taxon>Sphaerotilaceae</taxon>
        <taxon>Leptothrix</taxon>
    </lineage>
</organism>
<name>DAPF_LEPCP</name>